<evidence type="ECO:0000255" key="1">
    <source>
        <dbReference type="HAMAP-Rule" id="MF_00295"/>
    </source>
</evidence>
<evidence type="ECO:0000269" key="2">
    <source>
    </source>
</evidence>
<evidence type="ECO:0000303" key="3">
    <source>
    </source>
</evidence>
<evidence type="ECO:0000312" key="4">
    <source>
        <dbReference type="EMBL" id="SCN13862.1"/>
    </source>
</evidence>
<organism>
    <name type="scientific">Shouchella clausii</name>
    <name type="common">Alkalihalobacillus clausii</name>
    <dbReference type="NCBI Taxonomy" id="79880"/>
    <lineage>
        <taxon>Bacteria</taxon>
        <taxon>Bacillati</taxon>
        <taxon>Bacillota</taxon>
        <taxon>Bacilli</taxon>
        <taxon>Bacillales</taxon>
        <taxon>Bacillaceae</taxon>
        <taxon>Shouchella</taxon>
    </lineage>
</organism>
<dbReference type="EC" id="2.3.1.31" evidence="1 2"/>
<dbReference type="EMBL" id="LT613638">
    <property type="protein sequence ID" value="SCN13862.1"/>
    <property type="molecule type" value="Genomic_DNA"/>
</dbReference>
<dbReference type="SMR" id="A0A1D3PDD4"/>
<dbReference type="OMA" id="CSCLATH"/>
<dbReference type="UniPathway" id="UPA00051">
    <property type="reaction ID" value="UER00074"/>
</dbReference>
<dbReference type="GO" id="GO:0005737">
    <property type="term" value="C:cytoplasm"/>
    <property type="evidence" value="ECO:0007669"/>
    <property type="project" value="UniProtKB-SubCell"/>
</dbReference>
<dbReference type="GO" id="GO:0004414">
    <property type="term" value="F:homoserine O-acetyltransferase activity"/>
    <property type="evidence" value="ECO:0007669"/>
    <property type="project" value="UniProtKB-EC"/>
</dbReference>
<dbReference type="GO" id="GO:0008899">
    <property type="term" value="F:homoserine O-succinyltransferase activity"/>
    <property type="evidence" value="ECO:0007669"/>
    <property type="project" value="UniProtKB-UniRule"/>
</dbReference>
<dbReference type="GO" id="GO:0019281">
    <property type="term" value="P:L-methionine biosynthetic process from homoserine via O-succinyl-L-homoserine and cystathionine"/>
    <property type="evidence" value="ECO:0007669"/>
    <property type="project" value="InterPro"/>
</dbReference>
<dbReference type="CDD" id="cd03131">
    <property type="entry name" value="GATase1_HTS"/>
    <property type="match status" value="1"/>
</dbReference>
<dbReference type="FunFam" id="3.40.50.880:FF:000004">
    <property type="entry name" value="Homoserine O-succinyltransferase"/>
    <property type="match status" value="1"/>
</dbReference>
<dbReference type="Gene3D" id="3.40.50.880">
    <property type="match status" value="1"/>
</dbReference>
<dbReference type="HAMAP" id="MF_00295">
    <property type="entry name" value="MetA_acyltransf"/>
    <property type="match status" value="1"/>
</dbReference>
<dbReference type="InterPro" id="IPR029062">
    <property type="entry name" value="Class_I_gatase-like"/>
</dbReference>
<dbReference type="InterPro" id="IPR005697">
    <property type="entry name" value="HST_MetA"/>
</dbReference>
<dbReference type="InterPro" id="IPR033752">
    <property type="entry name" value="MetA_family"/>
</dbReference>
<dbReference type="NCBIfam" id="TIGR01001">
    <property type="entry name" value="metA"/>
    <property type="match status" value="1"/>
</dbReference>
<dbReference type="PANTHER" id="PTHR20919">
    <property type="entry name" value="HOMOSERINE O-SUCCINYLTRANSFERASE"/>
    <property type="match status" value="1"/>
</dbReference>
<dbReference type="PANTHER" id="PTHR20919:SF0">
    <property type="entry name" value="HOMOSERINE O-SUCCINYLTRANSFERASE"/>
    <property type="match status" value="1"/>
</dbReference>
<dbReference type="Pfam" id="PF04204">
    <property type="entry name" value="HTS"/>
    <property type="match status" value="1"/>
</dbReference>
<dbReference type="PIRSF" id="PIRSF000450">
    <property type="entry name" value="H_ser_succinyltr"/>
    <property type="match status" value="1"/>
</dbReference>
<dbReference type="SUPFAM" id="SSF52317">
    <property type="entry name" value="Class I glutamine amidotransferase-like"/>
    <property type="match status" value="1"/>
</dbReference>
<protein>
    <recommendedName>
        <fullName evidence="1">Homoserine O-acetyltransferase</fullName>
        <shortName evidence="1 3">HAT</shortName>
        <ecNumber evidence="1 2">2.3.1.31</ecNumber>
    </recommendedName>
    <alternativeName>
        <fullName evidence="1">Homoserine transacetylase</fullName>
        <shortName evidence="1">HTA</shortName>
    </alternativeName>
</protein>
<name>METAA_SHOCL</name>
<gene>
    <name evidence="1 3" type="primary">metAA</name>
    <name evidence="4" type="synonym">metA</name>
</gene>
<accession>A0A1D3PDD4</accession>
<feature type="chain" id="PRO_0000440336" description="Homoserine O-acetyltransferase">
    <location>
        <begin position="1"/>
        <end position="309"/>
    </location>
</feature>
<feature type="active site" description="Acyl-thioester intermediate" evidence="1">
    <location>
        <position position="148"/>
    </location>
</feature>
<feature type="active site" description="Proton acceptor" evidence="1">
    <location>
        <position position="241"/>
    </location>
</feature>
<feature type="active site" evidence="1">
    <location>
        <position position="243"/>
    </location>
</feature>
<feature type="binding site" evidence="1">
    <location>
        <position position="169"/>
    </location>
    <ligand>
        <name>substrate</name>
    </ligand>
</feature>
<feature type="binding site" evidence="1">
    <location>
        <position position="198"/>
    </location>
    <ligand>
        <name>substrate</name>
    </ligand>
</feature>
<feature type="binding site" evidence="1">
    <location>
        <position position="255"/>
    </location>
    <ligand>
        <name>substrate</name>
    </ligand>
</feature>
<feature type="site" description="Important for acyl-CoA specificity" evidence="1">
    <location>
        <position position="117"/>
    </location>
</feature>
<feature type="site" description="Important for substrate specificity" evidence="1">
    <location>
        <position position="198"/>
    </location>
</feature>
<proteinExistence type="evidence at protein level"/>
<reference key="1">
    <citation type="journal article" date="2017" name="Nat. Chem. Biol.">
        <title>Parallel evolution of non-homologous isofunctional enzymes in methionine biosynthesis.</title>
        <authorList>
            <person name="Bastard K."/>
            <person name="Perret A."/>
            <person name="Mariage A."/>
            <person name="Bessonnet T."/>
            <person name="Pinet-Turpault A."/>
            <person name="Petit J.L."/>
            <person name="Darii E."/>
            <person name="Bazire P."/>
            <person name="Vergne-Vaxelaire C."/>
            <person name="Brewee C."/>
            <person name="Debard A."/>
            <person name="Pellouin V."/>
            <person name="Besnard-Gonnet M."/>
            <person name="Artiguenave F."/>
            <person name="Medigue C."/>
            <person name="Vallenet D."/>
            <person name="Danchin A."/>
            <person name="Zaparucha A."/>
            <person name="Weissenbach J."/>
            <person name="Salanoubat M."/>
            <person name="de Berardinis V."/>
        </authorList>
    </citation>
    <scope>NUCLEOTIDE SEQUENCE [GENOMIC DNA]</scope>
    <scope>FUNCTION</scope>
    <scope>CATALYTIC ACTIVITY</scope>
    <source>
        <strain>DSM 8716</strain>
    </source>
</reference>
<keyword id="KW-0012">Acyltransferase</keyword>
<keyword id="KW-0028">Amino-acid biosynthesis</keyword>
<keyword id="KW-0963">Cytoplasm</keyword>
<keyword id="KW-0486">Methionine biosynthesis</keyword>
<keyword id="KW-0808">Transferase</keyword>
<sequence>MRERVAMPIKIPDHLPAKEILLKENIFIMDESRAYTQDIRPLKICILNLMPTKQETETQLLRLLGNTPLQVDVSLLHPSTHSPRNTSKEHLNLFYKTIDEVKQQKFDGMIITGAPVETLPFHDVNYWNEMTSILDWTTTNVTSTLHICWGAQAGLYHHYGIKKKPLTTKLFGVYSHKLEVKNVNLLRGFDDVFYAPHSRHTTVSREDIERVDELIVLSSSEEAGVYIASSKDGKRVFVMGHSEYDAHTLKQEYERDVKRGIACDPPFNYFPEGNVDALPPLQWRAHSNLLFSNWLNYYVYQETPYHLDD</sequence>
<comment type="function">
    <text evidence="2">Transfers an acetyl group from acetyl-CoA to L-homoserine, forming acetyl-L-homoserine. In vitro, can also use propionyl-CoA as acyl donor.</text>
</comment>
<comment type="catalytic activity">
    <reaction evidence="1 2">
        <text>L-homoserine + acetyl-CoA = O-acetyl-L-homoserine + CoA</text>
        <dbReference type="Rhea" id="RHEA:13701"/>
        <dbReference type="ChEBI" id="CHEBI:57287"/>
        <dbReference type="ChEBI" id="CHEBI:57288"/>
        <dbReference type="ChEBI" id="CHEBI:57476"/>
        <dbReference type="ChEBI" id="CHEBI:57716"/>
        <dbReference type="EC" id="2.3.1.31"/>
    </reaction>
</comment>
<comment type="pathway">
    <text evidence="1">Amino-acid biosynthesis; L-methionine biosynthesis via de novo pathway; O-acetyl-L-homoserine from L-homoserine: step 1/1.</text>
</comment>
<comment type="subcellular location">
    <subcellularLocation>
        <location evidence="1">Cytoplasm</location>
    </subcellularLocation>
</comment>
<comment type="similarity">
    <text evidence="1">Belongs to the MetA family.</text>
</comment>